<gene>
    <name evidence="1" type="primary">ung</name>
    <name type="ordered locus">BCE_5527</name>
</gene>
<reference key="1">
    <citation type="journal article" date="2004" name="Nucleic Acids Res.">
        <title>The genome sequence of Bacillus cereus ATCC 10987 reveals metabolic adaptations and a large plasmid related to Bacillus anthracis pXO1.</title>
        <authorList>
            <person name="Rasko D.A."/>
            <person name="Ravel J."/>
            <person name="Oekstad O.A."/>
            <person name="Helgason E."/>
            <person name="Cer R.Z."/>
            <person name="Jiang L."/>
            <person name="Shores K.A."/>
            <person name="Fouts D.E."/>
            <person name="Tourasse N.J."/>
            <person name="Angiuoli S.V."/>
            <person name="Kolonay J.F."/>
            <person name="Nelson W.C."/>
            <person name="Kolstoe A.-B."/>
            <person name="Fraser C.M."/>
            <person name="Read T.D."/>
        </authorList>
    </citation>
    <scope>NUCLEOTIDE SEQUENCE [LARGE SCALE GENOMIC DNA]</scope>
    <source>
        <strain>ATCC 10987 / NRS 248</strain>
    </source>
</reference>
<feature type="chain" id="PRO_0000176057" description="Uracil-DNA glycosylase">
    <location>
        <begin position="1"/>
        <end position="225"/>
    </location>
</feature>
<feature type="active site" description="Proton acceptor" evidence="1">
    <location>
        <position position="65"/>
    </location>
</feature>
<accession>Q72X51</accession>
<comment type="function">
    <text evidence="1">Excises uracil residues from the DNA which can arise as a result of misincorporation of dUMP residues by DNA polymerase or due to deamination of cytosine.</text>
</comment>
<comment type="catalytic activity">
    <reaction evidence="1">
        <text>Hydrolyzes single-stranded DNA or mismatched double-stranded DNA and polynucleotides, releasing free uracil.</text>
        <dbReference type="EC" id="3.2.2.27"/>
    </reaction>
</comment>
<comment type="subcellular location">
    <subcellularLocation>
        <location evidence="1">Cytoplasm</location>
    </subcellularLocation>
</comment>
<comment type="similarity">
    <text evidence="1">Belongs to the uracil-DNA glycosylase (UDG) superfamily. UNG family.</text>
</comment>
<proteinExistence type="inferred from homology"/>
<keyword id="KW-0963">Cytoplasm</keyword>
<keyword id="KW-0227">DNA damage</keyword>
<keyword id="KW-0234">DNA repair</keyword>
<keyword id="KW-0378">Hydrolase</keyword>
<name>UNG_BACC1</name>
<evidence type="ECO:0000255" key="1">
    <source>
        <dbReference type="HAMAP-Rule" id="MF_00148"/>
    </source>
</evidence>
<sequence>MENVLKNDWGPLLAPEFEKEYYRKLAGFLKEEYSTHVVYPKKEDIFNALEYTSYENTKVVILGQDPYHGPNQAHGLSFSVQPGIKTPPSLLNMYKELRDEYGYDIPNNGYLVKWAEQGVLLLNTVLTVRQGEANSHKGKGWEHFTDRVIELLNEREKPVIFILWGRHAQAKKKLITNTKHHIIESVHPSPLSARRGFFGSKPYSKVNTILANMGEREIDWEIPNL</sequence>
<organism>
    <name type="scientific">Bacillus cereus (strain ATCC 10987 / NRS 248)</name>
    <dbReference type="NCBI Taxonomy" id="222523"/>
    <lineage>
        <taxon>Bacteria</taxon>
        <taxon>Bacillati</taxon>
        <taxon>Bacillota</taxon>
        <taxon>Bacilli</taxon>
        <taxon>Bacillales</taxon>
        <taxon>Bacillaceae</taxon>
        <taxon>Bacillus</taxon>
        <taxon>Bacillus cereus group</taxon>
    </lineage>
</organism>
<dbReference type="EC" id="3.2.2.27" evidence="1"/>
<dbReference type="EMBL" id="AE017194">
    <property type="protein sequence ID" value="AAS44427.1"/>
    <property type="molecule type" value="Genomic_DNA"/>
</dbReference>
<dbReference type="SMR" id="Q72X51"/>
<dbReference type="KEGG" id="bca:BCE_5527"/>
<dbReference type="HOGENOM" id="CLU_032162_3_0_9"/>
<dbReference type="Proteomes" id="UP000002527">
    <property type="component" value="Chromosome"/>
</dbReference>
<dbReference type="GO" id="GO:0005737">
    <property type="term" value="C:cytoplasm"/>
    <property type="evidence" value="ECO:0007669"/>
    <property type="project" value="UniProtKB-SubCell"/>
</dbReference>
<dbReference type="GO" id="GO:0004844">
    <property type="term" value="F:uracil DNA N-glycosylase activity"/>
    <property type="evidence" value="ECO:0007669"/>
    <property type="project" value="UniProtKB-UniRule"/>
</dbReference>
<dbReference type="GO" id="GO:0097510">
    <property type="term" value="P:base-excision repair, AP site formation via deaminated base removal"/>
    <property type="evidence" value="ECO:0007669"/>
    <property type="project" value="TreeGrafter"/>
</dbReference>
<dbReference type="CDD" id="cd10027">
    <property type="entry name" value="UDG-F1-like"/>
    <property type="match status" value="1"/>
</dbReference>
<dbReference type="FunFam" id="3.40.470.10:FF:000001">
    <property type="entry name" value="Uracil-DNA glycosylase"/>
    <property type="match status" value="1"/>
</dbReference>
<dbReference type="Gene3D" id="3.40.470.10">
    <property type="entry name" value="Uracil-DNA glycosylase-like domain"/>
    <property type="match status" value="1"/>
</dbReference>
<dbReference type="HAMAP" id="MF_00148">
    <property type="entry name" value="UDG"/>
    <property type="match status" value="1"/>
</dbReference>
<dbReference type="InterPro" id="IPR002043">
    <property type="entry name" value="UDG_fam1"/>
</dbReference>
<dbReference type="InterPro" id="IPR018085">
    <property type="entry name" value="Ura-DNA_Glyclase_AS"/>
</dbReference>
<dbReference type="InterPro" id="IPR005122">
    <property type="entry name" value="Uracil-DNA_glycosylase-like"/>
</dbReference>
<dbReference type="InterPro" id="IPR036895">
    <property type="entry name" value="Uracil-DNA_glycosylase-like_sf"/>
</dbReference>
<dbReference type="NCBIfam" id="NF003588">
    <property type="entry name" value="PRK05254.1-1"/>
    <property type="match status" value="1"/>
</dbReference>
<dbReference type="NCBIfam" id="NF003589">
    <property type="entry name" value="PRK05254.1-2"/>
    <property type="match status" value="1"/>
</dbReference>
<dbReference type="NCBIfam" id="NF003591">
    <property type="entry name" value="PRK05254.1-4"/>
    <property type="match status" value="1"/>
</dbReference>
<dbReference type="NCBIfam" id="NF003592">
    <property type="entry name" value="PRK05254.1-5"/>
    <property type="match status" value="1"/>
</dbReference>
<dbReference type="NCBIfam" id="TIGR00628">
    <property type="entry name" value="ung"/>
    <property type="match status" value="1"/>
</dbReference>
<dbReference type="PANTHER" id="PTHR11264">
    <property type="entry name" value="URACIL-DNA GLYCOSYLASE"/>
    <property type="match status" value="1"/>
</dbReference>
<dbReference type="PANTHER" id="PTHR11264:SF0">
    <property type="entry name" value="URACIL-DNA GLYCOSYLASE"/>
    <property type="match status" value="1"/>
</dbReference>
<dbReference type="Pfam" id="PF03167">
    <property type="entry name" value="UDG"/>
    <property type="match status" value="1"/>
</dbReference>
<dbReference type="SMART" id="SM00986">
    <property type="entry name" value="UDG"/>
    <property type="match status" value="1"/>
</dbReference>
<dbReference type="SMART" id="SM00987">
    <property type="entry name" value="UreE_C"/>
    <property type="match status" value="1"/>
</dbReference>
<dbReference type="SUPFAM" id="SSF52141">
    <property type="entry name" value="Uracil-DNA glycosylase-like"/>
    <property type="match status" value="1"/>
</dbReference>
<dbReference type="PROSITE" id="PS00130">
    <property type="entry name" value="U_DNA_GLYCOSYLASE"/>
    <property type="match status" value="1"/>
</dbReference>
<protein>
    <recommendedName>
        <fullName evidence="1">Uracil-DNA glycosylase</fullName>
        <shortName evidence="1">UDG</shortName>
        <ecNumber evidence="1">3.2.2.27</ecNumber>
    </recommendedName>
</protein>